<keyword id="KW-0012">Acyltransferase</keyword>
<keyword id="KW-0963">Cytoplasm</keyword>
<keyword id="KW-0808">Transferase</keyword>
<sequence>MIRFITIPDFADYQVTLKLMEDYVNKVISDHKPEIIYLVEHSEVYTAGTNYKQEELLNYGDIPVIYTGRGGKFTFHGPGQRVIYPILNLASPNRHKDLKLYIKMLEEWIINSLNYFGIKAYIIKDKVGIWVKVRKDEFAKIAAIGVRVRKWVTYHGVAINISTDLSKFSGIIPCGLENSLVTSLNQLGIHVEMSEFDKIIQTEFNKIFK</sequence>
<evidence type="ECO:0000255" key="1">
    <source>
        <dbReference type="HAMAP-Rule" id="MF_00013"/>
    </source>
</evidence>
<evidence type="ECO:0000255" key="2">
    <source>
        <dbReference type="PROSITE-ProRule" id="PRU01067"/>
    </source>
</evidence>
<organism>
    <name type="scientific">Rickettsia conorii (strain ATCC VR-613 / Malish 7)</name>
    <dbReference type="NCBI Taxonomy" id="272944"/>
    <lineage>
        <taxon>Bacteria</taxon>
        <taxon>Pseudomonadati</taxon>
        <taxon>Pseudomonadota</taxon>
        <taxon>Alphaproteobacteria</taxon>
        <taxon>Rickettsiales</taxon>
        <taxon>Rickettsiaceae</taxon>
        <taxon>Rickettsieae</taxon>
        <taxon>Rickettsia</taxon>
        <taxon>spotted fever group</taxon>
    </lineage>
</organism>
<name>LIPB_RICCN</name>
<accession>Q92FX0</accession>
<comment type="function">
    <text evidence="1">Catalyzes the transfer of endogenously produced octanoic acid from octanoyl-acyl-carrier-protein onto the lipoyl domains of lipoate-dependent enzymes. Lipoyl-ACP can also act as a substrate although octanoyl-ACP is likely to be the physiological substrate.</text>
</comment>
<comment type="catalytic activity">
    <reaction evidence="1">
        <text>octanoyl-[ACP] + L-lysyl-[protein] = N(6)-octanoyl-L-lysyl-[protein] + holo-[ACP] + H(+)</text>
        <dbReference type="Rhea" id="RHEA:17665"/>
        <dbReference type="Rhea" id="RHEA-COMP:9636"/>
        <dbReference type="Rhea" id="RHEA-COMP:9685"/>
        <dbReference type="Rhea" id="RHEA-COMP:9752"/>
        <dbReference type="Rhea" id="RHEA-COMP:9928"/>
        <dbReference type="ChEBI" id="CHEBI:15378"/>
        <dbReference type="ChEBI" id="CHEBI:29969"/>
        <dbReference type="ChEBI" id="CHEBI:64479"/>
        <dbReference type="ChEBI" id="CHEBI:78463"/>
        <dbReference type="ChEBI" id="CHEBI:78809"/>
        <dbReference type="EC" id="2.3.1.181"/>
    </reaction>
</comment>
<comment type="pathway">
    <text evidence="1">Protein modification; protein lipoylation via endogenous pathway; protein N(6)-(lipoyl)lysine from octanoyl-[acyl-carrier-protein]: step 1/2.</text>
</comment>
<comment type="subcellular location">
    <subcellularLocation>
        <location evidence="1">Cytoplasm</location>
    </subcellularLocation>
</comment>
<comment type="miscellaneous">
    <text evidence="1">In the reaction, the free carboxyl group of octanoic acid is attached via an amide linkage to the epsilon-amino group of a specific lysine residue of lipoyl domains of lipoate-dependent enzymes.</text>
</comment>
<comment type="similarity">
    <text evidence="1">Belongs to the LipB family.</text>
</comment>
<feature type="chain" id="PRO_0000062873" description="Octanoyltransferase">
    <location>
        <begin position="1"/>
        <end position="209"/>
    </location>
</feature>
<feature type="domain" description="BPL/LPL catalytic" evidence="2">
    <location>
        <begin position="30"/>
        <end position="209"/>
    </location>
</feature>
<feature type="active site" description="Acyl-thioester intermediate" evidence="1">
    <location>
        <position position="174"/>
    </location>
</feature>
<feature type="binding site" evidence="1">
    <location>
        <begin position="69"/>
        <end position="76"/>
    </location>
    <ligand>
        <name>substrate</name>
    </ligand>
</feature>
<feature type="binding site" evidence="1">
    <location>
        <begin position="143"/>
        <end position="145"/>
    </location>
    <ligand>
        <name>substrate</name>
    </ligand>
</feature>
<feature type="binding site" evidence="1">
    <location>
        <begin position="156"/>
        <end position="158"/>
    </location>
    <ligand>
        <name>substrate</name>
    </ligand>
</feature>
<feature type="site" description="Lowers pKa of active site Cys" evidence="1">
    <location>
        <position position="140"/>
    </location>
</feature>
<gene>
    <name evidence="1" type="primary">lipB</name>
    <name type="ordered locus">RC1357</name>
</gene>
<reference key="1">
    <citation type="journal article" date="2001" name="Science">
        <title>Mechanisms of evolution in Rickettsia conorii and R. prowazekii.</title>
        <authorList>
            <person name="Ogata H."/>
            <person name="Audic S."/>
            <person name="Renesto-Audiffren P."/>
            <person name="Fournier P.-E."/>
            <person name="Barbe V."/>
            <person name="Samson D."/>
            <person name="Roux V."/>
            <person name="Cossart P."/>
            <person name="Weissenbach J."/>
            <person name="Claverie J.-M."/>
            <person name="Raoult D."/>
        </authorList>
    </citation>
    <scope>NUCLEOTIDE SEQUENCE [LARGE SCALE GENOMIC DNA]</scope>
    <source>
        <strain>ATCC VR-613 / Malish 7</strain>
    </source>
</reference>
<protein>
    <recommendedName>
        <fullName evidence="1">Octanoyltransferase</fullName>
        <ecNumber evidence="1">2.3.1.181</ecNumber>
    </recommendedName>
    <alternativeName>
        <fullName evidence="1">Lipoate-protein ligase B</fullName>
    </alternativeName>
    <alternativeName>
        <fullName evidence="1">Lipoyl/octanoyl transferase</fullName>
    </alternativeName>
    <alternativeName>
        <fullName evidence="1">Octanoyl-[acyl-carrier-protein]-protein N-octanoyltransferase</fullName>
    </alternativeName>
</protein>
<proteinExistence type="inferred from homology"/>
<dbReference type="EC" id="2.3.1.181" evidence="1"/>
<dbReference type="EMBL" id="AE006914">
    <property type="protein sequence ID" value="AAL03895.1"/>
    <property type="molecule type" value="Genomic_DNA"/>
</dbReference>
<dbReference type="PIR" id="E97869">
    <property type="entry name" value="E97869"/>
</dbReference>
<dbReference type="RefSeq" id="WP_010977910.1">
    <property type="nucleotide sequence ID" value="NC_003103.1"/>
</dbReference>
<dbReference type="SMR" id="Q92FX0"/>
<dbReference type="GeneID" id="928504"/>
<dbReference type="KEGG" id="rco:RC1357"/>
<dbReference type="PATRIC" id="fig|272944.4.peg.1557"/>
<dbReference type="HOGENOM" id="CLU_035168_3_0_5"/>
<dbReference type="UniPathway" id="UPA00538">
    <property type="reaction ID" value="UER00592"/>
</dbReference>
<dbReference type="Proteomes" id="UP000000816">
    <property type="component" value="Chromosome"/>
</dbReference>
<dbReference type="GO" id="GO:0005737">
    <property type="term" value="C:cytoplasm"/>
    <property type="evidence" value="ECO:0007669"/>
    <property type="project" value="UniProtKB-SubCell"/>
</dbReference>
<dbReference type="GO" id="GO:0033819">
    <property type="term" value="F:lipoyl(octanoyl) transferase activity"/>
    <property type="evidence" value="ECO:0007669"/>
    <property type="project" value="UniProtKB-EC"/>
</dbReference>
<dbReference type="GO" id="GO:0036211">
    <property type="term" value="P:protein modification process"/>
    <property type="evidence" value="ECO:0007669"/>
    <property type="project" value="InterPro"/>
</dbReference>
<dbReference type="CDD" id="cd16444">
    <property type="entry name" value="LipB"/>
    <property type="match status" value="1"/>
</dbReference>
<dbReference type="Gene3D" id="3.30.930.10">
    <property type="entry name" value="Bira Bifunctional Protein, Domain 2"/>
    <property type="match status" value="1"/>
</dbReference>
<dbReference type="HAMAP" id="MF_00013">
    <property type="entry name" value="LipB"/>
    <property type="match status" value="1"/>
</dbReference>
<dbReference type="InterPro" id="IPR045864">
    <property type="entry name" value="aa-tRNA-synth_II/BPL/LPL"/>
</dbReference>
<dbReference type="InterPro" id="IPR004143">
    <property type="entry name" value="BPL_LPL_catalytic"/>
</dbReference>
<dbReference type="InterPro" id="IPR000544">
    <property type="entry name" value="Octanoyltransferase"/>
</dbReference>
<dbReference type="InterPro" id="IPR020605">
    <property type="entry name" value="Octanoyltransferase_CS"/>
</dbReference>
<dbReference type="NCBIfam" id="TIGR00214">
    <property type="entry name" value="lipB"/>
    <property type="match status" value="1"/>
</dbReference>
<dbReference type="NCBIfam" id="NF010921">
    <property type="entry name" value="PRK14341.1"/>
    <property type="match status" value="1"/>
</dbReference>
<dbReference type="NCBIfam" id="NF010925">
    <property type="entry name" value="PRK14345.1"/>
    <property type="match status" value="1"/>
</dbReference>
<dbReference type="PANTHER" id="PTHR10993:SF7">
    <property type="entry name" value="LIPOYLTRANSFERASE 2, MITOCHONDRIAL-RELATED"/>
    <property type="match status" value="1"/>
</dbReference>
<dbReference type="PANTHER" id="PTHR10993">
    <property type="entry name" value="OCTANOYLTRANSFERASE"/>
    <property type="match status" value="1"/>
</dbReference>
<dbReference type="Pfam" id="PF21948">
    <property type="entry name" value="LplA-B_cat"/>
    <property type="match status" value="1"/>
</dbReference>
<dbReference type="PIRSF" id="PIRSF016262">
    <property type="entry name" value="LPLase"/>
    <property type="match status" value="1"/>
</dbReference>
<dbReference type="SUPFAM" id="SSF55681">
    <property type="entry name" value="Class II aaRS and biotin synthetases"/>
    <property type="match status" value="1"/>
</dbReference>
<dbReference type="PROSITE" id="PS51733">
    <property type="entry name" value="BPL_LPL_CATALYTIC"/>
    <property type="match status" value="1"/>
</dbReference>
<dbReference type="PROSITE" id="PS01313">
    <property type="entry name" value="LIPB"/>
    <property type="match status" value="1"/>
</dbReference>